<accession>O54705</accession>
<name>NOS2_CAVPO</name>
<reference key="1">
    <citation type="journal article" date="1998" name="Biochem. J.">
        <title>Molecular cloning and characterization of Ca2+-dependent inducible nitric oxide synthase from guinea-pig lung.</title>
        <authorList>
            <person name="Shirato M."/>
            <person name="Sakamoto T."/>
            <person name="Uchida Y."/>
            <person name="Nomura A."/>
            <person name="Ishii Y."/>
            <person name="Iijima H."/>
            <person name="Goto Y."/>
            <person name="Hasegawa S."/>
        </authorList>
    </citation>
    <scope>NUCLEOTIDE SEQUENCE [MRNA]</scope>
    <source>
        <strain>Hartley</strain>
        <tissue>Lung</tissue>
    </source>
</reference>
<comment type="function">
    <text evidence="4 5">Produces nitric oxide (NO) which is a messenger molecule with diverse functions throughout the body. In macrophages, NO mediates tumoricidal and bactericidal actions. Also has nitrosylase activity and mediates cysteine S-nitrosylation of cytoplasmic target proteins such PTGS2/COX2. As component of the iNOS-S100A8/9 transnitrosylase complex involved in the selective inflammatory stimulus-dependent S-nitrosylation of GAPDH implicated in regulation of the GAIT complex activity and probably multiple targets including ANXA5, EZR, MSN and VIM. Involved in inflammation, enhances the synthesis of pro-inflammatory mediators such as IL6 and IL8.</text>
</comment>
<comment type="catalytic activity">
    <reaction evidence="4">
        <text>2 L-arginine + 3 NADPH + 4 O2 + H(+) = 2 L-citrulline + 2 nitric oxide + 3 NADP(+) + 4 H2O</text>
        <dbReference type="Rhea" id="RHEA:19897"/>
        <dbReference type="ChEBI" id="CHEBI:15377"/>
        <dbReference type="ChEBI" id="CHEBI:15378"/>
        <dbReference type="ChEBI" id="CHEBI:15379"/>
        <dbReference type="ChEBI" id="CHEBI:16480"/>
        <dbReference type="ChEBI" id="CHEBI:32682"/>
        <dbReference type="ChEBI" id="CHEBI:57743"/>
        <dbReference type="ChEBI" id="CHEBI:57783"/>
        <dbReference type="ChEBI" id="CHEBI:58349"/>
        <dbReference type="EC" id="1.14.13.39"/>
    </reaction>
    <physiologicalReaction direction="left-to-right" evidence="4">
        <dbReference type="Rhea" id="RHEA:19898"/>
    </physiologicalReaction>
</comment>
<comment type="cofactor">
    <cofactor evidence="4">
        <name>heme b</name>
        <dbReference type="ChEBI" id="CHEBI:60344"/>
    </cofactor>
</comment>
<comment type="cofactor">
    <cofactor evidence="2">
        <name>FAD</name>
        <dbReference type="ChEBI" id="CHEBI:57692"/>
    </cofactor>
    <text evidence="2">Binds 1 FAD.</text>
</comment>
<comment type="cofactor">
    <cofactor evidence="4">
        <name>FMN</name>
        <dbReference type="ChEBI" id="CHEBI:58210"/>
    </cofactor>
    <text evidence="4">Binds 1 FMN.</text>
</comment>
<comment type="cofactor">
    <cofactor evidence="4">
        <name>(6R)-L-erythro-5,6,7,8-tetrahydrobiopterin</name>
        <dbReference type="ChEBI" id="CHEBI:59560"/>
    </cofactor>
    <text evidence="4">Tetrahydrobiopterin (BH4). May stabilize the dimeric form of the enzyme.</text>
</comment>
<comment type="activity regulation">
    <text>Regulated by calcium/calmodulin.</text>
</comment>
<comment type="subunit">
    <text evidence="3">Homodimer. Interacts with NHERF1. Interacts with GAPDH; induced by oxidatively-modified low-densitity lipoprotein (LDL(ox)). Interacts with S100A8 and S100A9 to form the iNOS-S100A8/9 transnitrosylase complex. Interacts with SPSB1, SPSB2 and SPSB4. Interacts with ELOC and CUL5 in the presence of SPSB1 or SPSB2 or SPSB4. Forms a complex with ASL, ASS1 and HSP90AA1; the complex regulates cell-autonomous L-arginine synthesis and citrulline recycling while channeling extracellular L-arginine to nitric oxide synthesis pathway.</text>
</comment>
<comment type="subcellular location">
    <subcellularLocation>
        <location evidence="4">Cytoplasm</location>
        <location evidence="4">Cytosol</location>
    </subcellularLocation>
    <text evidence="4">Localizes as discrete foci scattered throughout the cytosol and in the presence of SPSB1 and SPSB4, exhibits a more diffuse cytosolic localization.</text>
</comment>
<comment type="tissue specificity">
    <text>Expressed in the lung and colon. Not detected in the heart, aorta, liver, kidney, and spleen.</text>
</comment>
<comment type="induction">
    <text>By lipopolysaccharide (LPS); in kidney, spleen, and colon. Expression is reduced in the presence of LPS in lung.</text>
</comment>
<comment type="PTM">
    <text evidence="4">Polyubiquitinated; mediated by SPSB1, SPSB2 and SPSB4, leading to proteasomal degradation.</text>
</comment>
<comment type="similarity">
    <text evidence="10">Belongs to the NOS family.</text>
</comment>
<evidence type="ECO:0000250" key="1">
    <source>
        <dbReference type="UniProtKB" id="P29474"/>
    </source>
</evidence>
<evidence type="ECO:0000250" key="2">
    <source>
        <dbReference type="UniProtKB" id="P29476"/>
    </source>
</evidence>
<evidence type="ECO:0000250" key="3">
    <source>
        <dbReference type="UniProtKB" id="P29477"/>
    </source>
</evidence>
<evidence type="ECO:0000250" key="4">
    <source>
        <dbReference type="UniProtKB" id="P35228"/>
    </source>
</evidence>
<evidence type="ECO:0000250" key="5">
    <source>
        <dbReference type="UniProtKB" id="P79290"/>
    </source>
</evidence>
<evidence type="ECO:0000250" key="6">
    <source>
        <dbReference type="UniProtKB" id="Q06518"/>
    </source>
</evidence>
<evidence type="ECO:0000255" key="7">
    <source>
        <dbReference type="PROSITE-ProRule" id="PRU00088"/>
    </source>
</evidence>
<evidence type="ECO:0000255" key="8">
    <source>
        <dbReference type="PROSITE-ProRule" id="PRU00716"/>
    </source>
</evidence>
<evidence type="ECO:0000256" key="9">
    <source>
        <dbReference type="SAM" id="MobiDB-lite"/>
    </source>
</evidence>
<evidence type="ECO:0000305" key="10"/>
<feature type="chain" id="PRO_0000170929" description="Nitric oxide synthase, inducible">
    <location>
        <begin position="1"/>
        <end position="1149"/>
    </location>
</feature>
<feature type="domain" description="Flavodoxin-like" evidence="7">
    <location>
        <begin position="538"/>
        <end position="676"/>
    </location>
</feature>
<feature type="domain" description="FAD-binding FR-type" evidence="8">
    <location>
        <begin position="729"/>
        <end position="969"/>
    </location>
</feature>
<feature type="region of interest" description="Disordered" evidence="9">
    <location>
        <begin position="22"/>
        <end position="83"/>
    </location>
</feature>
<feature type="region of interest" description="Calmodulin-binding" evidence="4">
    <location>
        <begin position="514"/>
        <end position="534"/>
    </location>
</feature>
<feature type="short sequence motif" description="DINNN-motif; mediates interaction with SPSB1, SPSB2 and SPSB4" evidence="4">
    <location>
        <begin position="23"/>
        <end position="27"/>
    </location>
</feature>
<feature type="compositionally biased region" description="Polar residues" evidence="9">
    <location>
        <begin position="50"/>
        <end position="61"/>
    </location>
</feature>
<feature type="binding site" evidence="4">
    <location>
        <position position="109"/>
    </location>
    <ligand>
        <name>Zn(2+)</name>
        <dbReference type="ChEBI" id="CHEBI:29105"/>
        <note>ligand shared between homodimeric partners</note>
    </ligand>
</feature>
<feature type="binding site" evidence="4">
    <location>
        <position position="114"/>
    </location>
    <ligand>
        <name>Zn(2+)</name>
        <dbReference type="ChEBI" id="CHEBI:29105"/>
        <note>ligand shared between homodimeric partners</note>
    </ligand>
</feature>
<feature type="binding site" evidence="1">
    <location>
        <position position="117"/>
    </location>
    <ligand>
        <name>(6R)-L-erythro-5,6,7,8-tetrahydrobiopterin</name>
        <dbReference type="ChEBI" id="CHEBI:59560"/>
    </ligand>
</feature>
<feature type="binding site" description="axial binding residue" evidence="1">
    <location>
        <position position="199"/>
    </location>
    <ligand>
        <name>heme b</name>
        <dbReference type="ChEBI" id="CHEBI:60344"/>
    </ligand>
    <ligandPart>
        <name>Fe</name>
        <dbReference type="ChEBI" id="CHEBI:18248"/>
    </ligandPart>
</feature>
<feature type="binding site" evidence="1">
    <location>
        <position position="262"/>
    </location>
    <ligand>
        <name>L-arginine</name>
        <dbReference type="ChEBI" id="CHEBI:32682"/>
    </ligand>
</feature>
<feature type="binding site" evidence="1">
    <location>
        <position position="371"/>
    </location>
    <ligand>
        <name>L-arginine</name>
        <dbReference type="ChEBI" id="CHEBI:32682"/>
    </ligand>
</feature>
<feature type="binding site" evidence="1">
    <location>
        <position position="372"/>
    </location>
    <ligand>
        <name>L-arginine</name>
        <dbReference type="ChEBI" id="CHEBI:32682"/>
    </ligand>
</feature>
<feature type="binding site" evidence="1">
    <location>
        <position position="376"/>
    </location>
    <ligand>
        <name>L-arginine</name>
        <dbReference type="ChEBI" id="CHEBI:32682"/>
    </ligand>
</feature>
<feature type="binding site" evidence="4">
    <location>
        <position position="380"/>
    </location>
    <ligand>
        <name>(6R)-L-erythro-5,6,7,8-tetrahydrobiopterin</name>
        <dbReference type="ChEBI" id="CHEBI:59560"/>
    </ligand>
</feature>
<feature type="binding site" evidence="4">
    <location>
        <position position="461"/>
    </location>
    <ligand>
        <name>(6R)-L-erythro-5,6,7,8-tetrahydrobiopterin</name>
        <dbReference type="ChEBI" id="CHEBI:59560"/>
    </ligand>
</feature>
<feature type="binding site" evidence="1">
    <location>
        <position position="462"/>
    </location>
    <ligand>
        <name>(6R)-L-erythro-5,6,7,8-tetrahydrobiopterin</name>
        <dbReference type="ChEBI" id="CHEBI:59560"/>
    </ligand>
</feature>
<feature type="binding site" evidence="1">
    <location>
        <position position="475"/>
    </location>
    <ligand>
        <name>(6R)-L-erythro-5,6,7,8-tetrahydrobiopterin</name>
        <dbReference type="ChEBI" id="CHEBI:59560"/>
    </ligand>
</feature>
<feature type="binding site" evidence="1">
    <location>
        <position position="490"/>
    </location>
    <ligand>
        <name>heme b</name>
        <dbReference type="ChEBI" id="CHEBI:60344"/>
    </ligand>
</feature>
<feature type="binding site" evidence="4">
    <location>
        <position position="544"/>
    </location>
    <ligand>
        <name>FMN</name>
        <dbReference type="ChEBI" id="CHEBI:58210"/>
    </ligand>
</feature>
<feature type="binding site" evidence="4">
    <location>
        <position position="545"/>
    </location>
    <ligand>
        <name>FMN</name>
        <dbReference type="ChEBI" id="CHEBI:58210"/>
    </ligand>
</feature>
<feature type="binding site" evidence="4">
    <location>
        <position position="546"/>
    </location>
    <ligand>
        <name>FMN</name>
        <dbReference type="ChEBI" id="CHEBI:58210"/>
    </ligand>
</feature>
<feature type="binding site" evidence="4">
    <location>
        <position position="548"/>
    </location>
    <ligand>
        <name>FMN</name>
        <dbReference type="ChEBI" id="CHEBI:58210"/>
    </ligand>
</feature>
<feature type="binding site" evidence="4">
    <location>
        <position position="549"/>
    </location>
    <ligand>
        <name>FMN</name>
        <dbReference type="ChEBI" id="CHEBI:58210"/>
    </ligand>
</feature>
<feature type="binding site" evidence="4">
    <location>
        <position position="590"/>
    </location>
    <ligand>
        <name>FMN</name>
        <dbReference type="ChEBI" id="CHEBI:58210"/>
    </ligand>
</feature>
<feature type="binding site" evidence="4">
    <location>
        <position position="591"/>
    </location>
    <ligand>
        <name>FMN</name>
        <dbReference type="ChEBI" id="CHEBI:58210"/>
    </ligand>
</feature>
<feature type="binding site" evidence="4">
    <location>
        <position position="627"/>
    </location>
    <ligand>
        <name>FMN</name>
        <dbReference type="ChEBI" id="CHEBI:58210"/>
    </ligand>
</feature>
<feature type="binding site" evidence="4">
    <location>
        <position position="632"/>
    </location>
    <ligand>
        <name>FMN</name>
        <dbReference type="ChEBI" id="CHEBI:58210"/>
    </ligand>
</feature>
<feature type="binding site" evidence="4">
    <location>
        <position position="634"/>
    </location>
    <ligand>
        <name>FMN</name>
        <dbReference type="ChEBI" id="CHEBI:58210"/>
    </ligand>
</feature>
<feature type="binding site" evidence="4">
    <location>
        <position position="660"/>
    </location>
    <ligand>
        <name>FMN</name>
        <dbReference type="ChEBI" id="CHEBI:58210"/>
    </ligand>
</feature>
<feature type="binding site" evidence="4">
    <location>
        <position position="664"/>
    </location>
    <ligand>
        <name>FMN</name>
        <dbReference type="ChEBI" id="CHEBI:58210"/>
    </ligand>
</feature>
<feature type="binding site" evidence="2">
    <location>
        <position position="749"/>
    </location>
    <ligand>
        <name>NADP(+)</name>
        <dbReference type="ChEBI" id="CHEBI:58349"/>
    </ligand>
</feature>
<feature type="binding site" evidence="2">
    <location>
        <position position="771"/>
    </location>
    <ligand>
        <name>FAD</name>
        <dbReference type="ChEBI" id="CHEBI:57692"/>
    </ligand>
</feature>
<feature type="binding site" evidence="2">
    <location>
        <position position="905"/>
    </location>
    <ligand>
        <name>FAD</name>
        <dbReference type="ChEBI" id="CHEBI:57692"/>
    </ligand>
</feature>
<feature type="binding site" evidence="2">
    <location>
        <position position="907"/>
    </location>
    <ligand>
        <name>FAD</name>
        <dbReference type="ChEBI" id="CHEBI:57692"/>
    </ligand>
</feature>
<feature type="binding site" evidence="2">
    <location>
        <position position="908"/>
    </location>
    <ligand>
        <name>FAD</name>
        <dbReference type="ChEBI" id="CHEBI:57692"/>
    </ligand>
</feature>
<feature type="binding site" evidence="2">
    <location>
        <position position="923"/>
    </location>
    <ligand>
        <name>FAD</name>
        <dbReference type="ChEBI" id="CHEBI:57692"/>
    </ligand>
</feature>
<feature type="binding site" evidence="2">
    <location>
        <position position="925"/>
    </location>
    <ligand>
        <name>FAD</name>
        <dbReference type="ChEBI" id="CHEBI:57692"/>
    </ligand>
</feature>
<feature type="binding site" evidence="2">
    <location>
        <position position="928"/>
    </location>
    <ligand>
        <name>NADP(+)</name>
        <dbReference type="ChEBI" id="CHEBI:58349"/>
    </ligand>
</feature>
<feature type="binding site" evidence="2">
    <location>
        <position position="929"/>
    </location>
    <ligand>
        <name>FAD</name>
        <dbReference type="ChEBI" id="CHEBI:57692"/>
    </ligand>
</feature>
<feature type="binding site" evidence="2">
    <location>
        <position position="942"/>
    </location>
    <ligand>
        <name>FAD</name>
        <dbReference type="ChEBI" id="CHEBI:57692"/>
    </ligand>
</feature>
<feature type="binding site" evidence="2">
    <location>
        <position position="943"/>
    </location>
    <ligand>
        <name>FAD</name>
        <dbReference type="ChEBI" id="CHEBI:57692"/>
    </ligand>
</feature>
<feature type="binding site" evidence="2">
    <location>
        <position position="944"/>
    </location>
    <ligand>
        <name>FAD</name>
        <dbReference type="ChEBI" id="CHEBI:57692"/>
    </ligand>
</feature>
<feature type="binding site" evidence="2">
    <location>
        <position position="983"/>
    </location>
    <ligand>
        <name>NADP(+)</name>
        <dbReference type="ChEBI" id="CHEBI:58349"/>
    </ligand>
</feature>
<feature type="binding site" evidence="2">
    <location>
        <position position="1016"/>
    </location>
    <ligand>
        <name>NADP(+)</name>
        <dbReference type="ChEBI" id="CHEBI:58349"/>
    </ligand>
</feature>
<feature type="binding site" evidence="2">
    <location>
        <position position="1045"/>
    </location>
    <ligand>
        <name>NADP(+)</name>
        <dbReference type="ChEBI" id="CHEBI:58349"/>
    </ligand>
</feature>
<feature type="binding site" evidence="2">
    <location>
        <position position="1046"/>
    </location>
    <ligand>
        <name>NADP(+)</name>
        <dbReference type="ChEBI" id="CHEBI:58349"/>
    </ligand>
</feature>
<feature type="binding site" evidence="2">
    <location>
        <position position="1052"/>
    </location>
    <ligand>
        <name>NADP(+)</name>
        <dbReference type="ChEBI" id="CHEBI:58349"/>
    </ligand>
</feature>
<feature type="binding site" evidence="2">
    <location>
        <position position="1054"/>
    </location>
    <ligand>
        <name>NADP(+)</name>
        <dbReference type="ChEBI" id="CHEBI:58349"/>
    </ligand>
</feature>
<feature type="binding site" evidence="2">
    <location>
        <position position="1056"/>
    </location>
    <ligand>
        <name>NADP(+)</name>
        <dbReference type="ChEBI" id="CHEBI:58349"/>
    </ligand>
</feature>
<feature type="binding site" evidence="2">
    <location>
        <position position="1089"/>
    </location>
    <ligand>
        <name>NADP(+)</name>
        <dbReference type="ChEBI" id="CHEBI:58349"/>
    </ligand>
</feature>
<feature type="modified residue" description="Phosphotyrosine" evidence="6">
    <location>
        <position position="574"/>
    </location>
</feature>
<keyword id="KW-0106">Calcium</keyword>
<keyword id="KW-0112">Calmodulin-binding</keyword>
<keyword id="KW-0963">Cytoplasm</keyword>
<keyword id="KW-0274">FAD</keyword>
<keyword id="KW-0285">Flavoprotein</keyword>
<keyword id="KW-0288">FMN</keyword>
<keyword id="KW-0349">Heme</keyword>
<keyword id="KW-0408">Iron</keyword>
<keyword id="KW-0479">Metal-binding</keyword>
<keyword id="KW-0521">NADP</keyword>
<keyword id="KW-0560">Oxidoreductase</keyword>
<keyword id="KW-0597">Phosphoprotein</keyword>
<keyword id="KW-1185">Reference proteome</keyword>
<keyword id="KW-0832">Ubl conjugation</keyword>
<keyword id="KW-0862">Zinc</keyword>
<sequence>MACPWNFLWKLKSSRYDLTEEKDINNNVGKASHLYSPEIQDDPKYCSPGKHQNGSSQSLTGTAKKVPESQSKPHKPSPTCSQHMKIKNWGNGMILQDTLHTKAKTNFTCKPKSCLGSVMNPRSMTRGPRDTPIPPDELLPQAIEFVNQYYDSFKEAKIEEYLARVETVTKEIETTGTYQLTGDELIFATKLAWRNAPRCIGRIQWSNLQVFDARSCHTAQEMFEHICRHVRYSTNNGNIRSAITVFPQRTDGKHDFRVWNAQLIRYAGYQMPDGTIQGDPANLEFTQLCIDLGWKPRYGRFDVLPLILQADGRDPELFEIPPDLVLEVPMEHPKYEWFQDLGLKWYALPAVANMLLEVGGLEFPACPFNGWYMGTEIGVRDFCDAQRYNILEEVGRRMGLETHTLASLWKDRAVTEINVAVLHSFQKQNVTIMDHHSAAESFMKHMQNEYRARGGCPADWIWLVPPISGSITPVFHQEMLNYILSPFYYYQVEAWKTHVWQDETRRPKRREIPFRVLAKATLFASLLMRKMMASRVRATILFATETGKSEALAQDLGALFSCAFNPKVLCMDQYQLSSLEEEKLLLVVTSTFGNGDCPGNGETLKKSLFVLKKLTNTFRYAVFGLGSSMYPRFCAFAHDIDIKLSQLGASQLTPVGEGDELSGQEDAFCTWAVQTFQAACAAFDVRGRHHITIPKRYTSSVTWEPYHYRLVQDSQPLDLNKALSRMHATDVFTMRLKSQKNLQSPKSSRTTLLMELSCDDSRSLAYLPGEHLGVFPCNQPALVQGILECVVDNPGPHHTVCLEVLDDSGSYWAKDKRLPPCSLSQALTYFLDITTPPTQLQLQKLARLATEQAERLRLESLSQPSEYNKWKFTNSPTFLEVLEEFPSLRVPAAFLLSQLPILKPRYYSISSSLDHTPAEVHLTVAVVTYRTRDGRGPLHHGVCSTWFSGLKPQDPVPCLVRSVNSFQLPKDPSQPCILIGPGTGIAPFRSFWQQRLHNLKHTGLQGGRMTLLFGCRHPEEDHIYKEEMQEMVQKGVLHEVHTAYSRLPGKPKAYVQDILRQQLAREVLRVLHEEPGHLYVCGNVLMAQDVACTLKQLLAAKLNLNEEQVEDYFFQLKSQKRYHEDIFGAVFPHGVKKDRAERPPGDDKL</sequence>
<protein>
    <recommendedName>
        <fullName>Nitric oxide synthase, inducible</fullName>
        <ecNumber evidence="4">1.14.13.39</ecNumber>
    </recommendedName>
    <alternativeName>
        <fullName>Inducible NO synthase</fullName>
        <shortName>Inducible NOS</shortName>
        <shortName>iNOS</shortName>
    </alternativeName>
    <alternativeName>
        <fullName>NOS type II</fullName>
    </alternativeName>
    <alternativeName>
        <fullName>Peptidyl-cysteine S-nitrosylase NOS2</fullName>
    </alternativeName>
</protein>
<organism>
    <name type="scientific">Cavia porcellus</name>
    <name type="common">Guinea pig</name>
    <dbReference type="NCBI Taxonomy" id="10141"/>
    <lineage>
        <taxon>Eukaryota</taxon>
        <taxon>Metazoa</taxon>
        <taxon>Chordata</taxon>
        <taxon>Craniata</taxon>
        <taxon>Vertebrata</taxon>
        <taxon>Euteleostomi</taxon>
        <taxon>Mammalia</taxon>
        <taxon>Eutheria</taxon>
        <taxon>Euarchontoglires</taxon>
        <taxon>Glires</taxon>
        <taxon>Rodentia</taxon>
        <taxon>Hystricomorpha</taxon>
        <taxon>Caviidae</taxon>
        <taxon>Cavia</taxon>
    </lineage>
</organism>
<gene>
    <name type="primary">NOS2</name>
    <name type="synonym">NOS</name>
</gene>
<dbReference type="EC" id="1.14.13.39" evidence="4"/>
<dbReference type="EMBL" id="AF027180">
    <property type="protein sequence ID" value="AAC33177.1"/>
    <property type="molecule type" value="mRNA"/>
</dbReference>
<dbReference type="RefSeq" id="NP_001166455.1">
    <property type="nucleotide sequence ID" value="NM_001172984.1"/>
</dbReference>
<dbReference type="SMR" id="O54705"/>
<dbReference type="FunCoup" id="O54705">
    <property type="interactions" value="671"/>
</dbReference>
<dbReference type="STRING" id="10141.ENSCPOP00000016760"/>
<dbReference type="GeneID" id="100135576"/>
<dbReference type="KEGG" id="cpoc:100135576"/>
<dbReference type="CTD" id="4843"/>
<dbReference type="eggNOG" id="KOG1158">
    <property type="taxonomic scope" value="Eukaryota"/>
</dbReference>
<dbReference type="InParanoid" id="O54705"/>
<dbReference type="OrthoDB" id="1688044at2759"/>
<dbReference type="Proteomes" id="UP000005447">
    <property type="component" value="Unassembled WGS sequence"/>
</dbReference>
<dbReference type="GO" id="GO:0005829">
    <property type="term" value="C:cytosol"/>
    <property type="evidence" value="ECO:0007669"/>
    <property type="project" value="UniProtKB-SubCell"/>
</dbReference>
<dbReference type="GO" id="GO:0005516">
    <property type="term" value="F:calmodulin binding"/>
    <property type="evidence" value="ECO:0007669"/>
    <property type="project" value="UniProtKB-KW"/>
</dbReference>
<dbReference type="GO" id="GO:0050660">
    <property type="term" value="F:flavin adenine dinucleotide binding"/>
    <property type="evidence" value="ECO:0007669"/>
    <property type="project" value="InterPro"/>
</dbReference>
<dbReference type="GO" id="GO:0010181">
    <property type="term" value="F:FMN binding"/>
    <property type="evidence" value="ECO:0007669"/>
    <property type="project" value="InterPro"/>
</dbReference>
<dbReference type="GO" id="GO:0020037">
    <property type="term" value="F:heme binding"/>
    <property type="evidence" value="ECO:0007669"/>
    <property type="project" value="InterPro"/>
</dbReference>
<dbReference type="GO" id="GO:0046872">
    <property type="term" value="F:metal ion binding"/>
    <property type="evidence" value="ECO:0007669"/>
    <property type="project" value="UniProtKB-KW"/>
</dbReference>
<dbReference type="GO" id="GO:0050661">
    <property type="term" value="F:NADP binding"/>
    <property type="evidence" value="ECO:0007669"/>
    <property type="project" value="InterPro"/>
</dbReference>
<dbReference type="GO" id="GO:0004517">
    <property type="term" value="F:nitric-oxide synthase activity"/>
    <property type="evidence" value="ECO:0000250"/>
    <property type="project" value="UniProtKB"/>
</dbReference>
<dbReference type="GO" id="GO:0042742">
    <property type="term" value="P:defense response to bacterium"/>
    <property type="evidence" value="ECO:0000250"/>
    <property type="project" value="UniProtKB"/>
</dbReference>
<dbReference type="GO" id="GO:0006809">
    <property type="term" value="P:nitric oxide biosynthetic process"/>
    <property type="evidence" value="ECO:0007669"/>
    <property type="project" value="InterPro"/>
</dbReference>
<dbReference type="GO" id="GO:0018119">
    <property type="term" value="P:peptidyl-cysteine S-nitrosylation"/>
    <property type="evidence" value="ECO:0000250"/>
    <property type="project" value="UniProtKB"/>
</dbReference>
<dbReference type="GO" id="GO:0032755">
    <property type="term" value="P:positive regulation of interleukin-6 production"/>
    <property type="evidence" value="ECO:0000250"/>
    <property type="project" value="UniProtKB"/>
</dbReference>
<dbReference type="GO" id="GO:0032757">
    <property type="term" value="P:positive regulation of interleukin-8 production"/>
    <property type="evidence" value="ECO:0000250"/>
    <property type="project" value="UniProtKB"/>
</dbReference>
<dbReference type="GO" id="GO:0032310">
    <property type="term" value="P:prostaglandin secretion"/>
    <property type="evidence" value="ECO:0000250"/>
    <property type="project" value="UniProtKB"/>
</dbReference>
<dbReference type="GO" id="GO:1900015">
    <property type="term" value="P:regulation of cytokine production involved in inflammatory response"/>
    <property type="evidence" value="ECO:0000250"/>
    <property type="project" value="UniProtKB"/>
</dbReference>
<dbReference type="GO" id="GO:0006801">
    <property type="term" value="P:superoxide metabolic process"/>
    <property type="evidence" value="ECO:0000250"/>
    <property type="project" value="UniProtKB"/>
</dbReference>
<dbReference type="CDD" id="cd00795">
    <property type="entry name" value="NOS_oxygenase_euk"/>
    <property type="match status" value="1"/>
</dbReference>
<dbReference type="FunFam" id="1.20.990.10:FF:000006">
    <property type="entry name" value="Nitric oxide synthase"/>
    <property type="match status" value="1"/>
</dbReference>
<dbReference type="FunFam" id="3.40.50.360:FF:000039">
    <property type="entry name" value="Nitric oxide synthase"/>
    <property type="match status" value="1"/>
</dbReference>
<dbReference type="FunFam" id="3.40.50.80:FF:000003">
    <property type="entry name" value="Nitric oxide synthase"/>
    <property type="match status" value="1"/>
</dbReference>
<dbReference type="FunFam" id="3.90.1230.10:FF:000001">
    <property type="entry name" value="Nitric oxide synthase, brain"/>
    <property type="match status" value="1"/>
</dbReference>
<dbReference type="FunFam" id="3.90.440.10:FF:000005">
    <property type="entry name" value="Nitric oxide synthase, inducible"/>
    <property type="match status" value="1"/>
</dbReference>
<dbReference type="Gene3D" id="3.40.50.360">
    <property type="match status" value="2"/>
</dbReference>
<dbReference type="Gene3D" id="6.10.250.410">
    <property type="match status" value="1"/>
</dbReference>
<dbReference type="Gene3D" id="1.20.990.10">
    <property type="entry name" value="NADPH-cytochrome p450 Reductase, Chain A, domain 3"/>
    <property type="match status" value="1"/>
</dbReference>
<dbReference type="Gene3D" id="3.90.340.10">
    <property type="entry name" value="Nitric Oxide Synthase, Chain A, domain 1"/>
    <property type="match status" value="1"/>
</dbReference>
<dbReference type="Gene3D" id="3.90.1230.10">
    <property type="entry name" value="Nitric Oxide Synthase, Chain A, domain 3"/>
    <property type="match status" value="1"/>
</dbReference>
<dbReference type="Gene3D" id="3.90.440.10">
    <property type="entry name" value="Nitric Oxide Synthase,Heme Domain,Chain A domain 2"/>
    <property type="match status" value="1"/>
</dbReference>
<dbReference type="Gene3D" id="3.40.50.80">
    <property type="entry name" value="Nucleotide-binding domain of ferredoxin-NADP reductase (FNR) module"/>
    <property type="match status" value="1"/>
</dbReference>
<dbReference type="Gene3D" id="2.40.30.10">
    <property type="entry name" value="Translation factors"/>
    <property type="match status" value="1"/>
</dbReference>
<dbReference type="InterPro" id="IPR003097">
    <property type="entry name" value="CysJ-like_FAD-binding"/>
</dbReference>
<dbReference type="InterPro" id="IPR017927">
    <property type="entry name" value="FAD-bd_FR_type"/>
</dbReference>
<dbReference type="InterPro" id="IPR001094">
    <property type="entry name" value="Flavdoxin-like"/>
</dbReference>
<dbReference type="InterPro" id="IPR008254">
    <property type="entry name" value="Flavodoxin/NO_synth"/>
</dbReference>
<dbReference type="InterPro" id="IPR001709">
    <property type="entry name" value="Flavoprot_Pyr_Nucl_cyt_Rdtase"/>
</dbReference>
<dbReference type="InterPro" id="IPR029039">
    <property type="entry name" value="Flavoprotein-like_sf"/>
</dbReference>
<dbReference type="InterPro" id="IPR039261">
    <property type="entry name" value="FNR_nucleotide-bd"/>
</dbReference>
<dbReference type="InterPro" id="IPR023173">
    <property type="entry name" value="NADPH_Cyt_P450_Rdtase_alpha"/>
</dbReference>
<dbReference type="InterPro" id="IPR050607">
    <property type="entry name" value="NOS"/>
</dbReference>
<dbReference type="InterPro" id="IPR044943">
    <property type="entry name" value="NOS_dom_1"/>
</dbReference>
<dbReference type="InterPro" id="IPR044940">
    <property type="entry name" value="NOS_dom_2"/>
</dbReference>
<dbReference type="InterPro" id="IPR044944">
    <property type="entry name" value="NOS_dom_3"/>
</dbReference>
<dbReference type="InterPro" id="IPR012144">
    <property type="entry name" value="NOS_euk"/>
</dbReference>
<dbReference type="InterPro" id="IPR004030">
    <property type="entry name" value="NOS_N"/>
</dbReference>
<dbReference type="InterPro" id="IPR036119">
    <property type="entry name" value="NOS_N_sf"/>
</dbReference>
<dbReference type="InterPro" id="IPR001433">
    <property type="entry name" value="OxRdtase_FAD/NAD-bd"/>
</dbReference>
<dbReference type="InterPro" id="IPR017938">
    <property type="entry name" value="Riboflavin_synthase-like_b-brl"/>
</dbReference>
<dbReference type="PANTHER" id="PTHR43410:SF4">
    <property type="entry name" value="NITRIC OXIDE SYNTHASE"/>
    <property type="match status" value="1"/>
</dbReference>
<dbReference type="PANTHER" id="PTHR43410">
    <property type="entry name" value="NITRIC OXIDE SYNTHASE OXYGENASE"/>
    <property type="match status" value="1"/>
</dbReference>
<dbReference type="Pfam" id="PF00667">
    <property type="entry name" value="FAD_binding_1"/>
    <property type="match status" value="1"/>
</dbReference>
<dbReference type="Pfam" id="PF00258">
    <property type="entry name" value="Flavodoxin_1"/>
    <property type="match status" value="1"/>
</dbReference>
<dbReference type="Pfam" id="PF00175">
    <property type="entry name" value="NAD_binding_1"/>
    <property type="match status" value="1"/>
</dbReference>
<dbReference type="Pfam" id="PF02898">
    <property type="entry name" value="NO_synthase"/>
    <property type="match status" value="1"/>
</dbReference>
<dbReference type="PIRSF" id="PIRSF000333">
    <property type="entry name" value="NOS"/>
    <property type="match status" value="1"/>
</dbReference>
<dbReference type="PRINTS" id="PR00369">
    <property type="entry name" value="FLAVODOXIN"/>
</dbReference>
<dbReference type="PRINTS" id="PR00371">
    <property type="entry name" value="FPNCR"/>
</dbReference>
<dbReference type="SUPFAM" id="SSF52343">
    <property type="entry name" value="Ferredoxin reductase-like, C-terminal NADP-linked domain"/>
    <property type="match status" value="1"/>
</dbReference>
<dbReference type="SUPFAM" id="SSF52218">
    <property type="entry name" value="Flavoproteins"/>
    <property type="match status" value="1"/>
</dbReference>
<dbReference type="SUPFAM" id="SSF56512">
    <property type="entry name" value="Nitric oxide (NO) synthase oxygenase domain"/>
    <property type="match status" value="1"/>
</dbReference>
<dbReference type="SUPFAM" id="SSF63380">
    <property type="entry name" value="Riboflavin synthase domain-like"/>
    <property type="match status" value="1"/>
</dbReference>
<dbReference type="PROSITE" id="PS51384">
    <property type="entry name" value="FAD_FR"/>
    <property type="match status" value="1"/>
</dbReference>
<dbReference type="PROSITE" id="PS50902">
    <property type="entry name" value="FLAVODOXIN_LIKE"/>
    <property type="match status" value="1"/>
</dbReference>
<dbReference type="PROSITE" id="PS60001">
    <property type="entry name" value="NOS"/>
    <property type="match status" value="1"/>
</dbReference>
<proteinExistence type="evidence at transcript level"/>